<dbReference type="EMBL" id="X65869">
    <property type="protein sequence ID" value="CAA46699.1"/>
    <property type="molecule type" value="mRNA"/>
</dbReference>
<dbReference type="EMBL" id="L13220">
    <property type="protein sequence ID" value="AAA35638.1"/>
    <property type="molecule type" value="mRNA"/>
</dbReference>
<dbReference type="EMBL" id="L13042">
    <property type="protein sequence ID" value="AAA35637.1"/>
    <property type="molecule type" value="Genomic_DNA"/>
</dbReference>
<dbReference type="EMBL" id="AL445467">
    <property type="status" value="NOT_ANNOTATED_CDS"/>
    <property type="molecule type" value="Genomic_DNA"/>
</dbReference>
<dbReference type="EMBL" id="BC112174">
    <property type="protein sequence ID" value="AAI12175.1"/>
    <property type="molecule type" value="mRNA"/>
</dbReference>
<dbReference type="CCDS" id="CCDS14176.1"/>
<dbReference type="PIR" id="JN0246">
    <property type="entry name" value="JN0246"/>
</dbReference>
<dbReference type="RefSeq" id="NP_004048.1">
    <property type="nucleotide sequence ID" value="NM_004057.3"/>
</dbReference>
<dbReference type="RefSeq" id="XP_016885330.1">
    <property type="nucleotide sequence ID" value="XM_017029841.2"/>
</dbReference>
<dbReference type="RefSeq" id="XP_054183844.1">
    <property type="nucleotide sequence ID" value="XM_054327869.1"/>
</dbReference>
<dbReference type="BMRB" id="P29377"/>
<dbReference type="SMR" id="P29377"/>
<dbReference type="BioGRID" id="107246">
    <property type="interactions" value="1"/>
</dbReference>
<dbReference type="FunCoup" id="P29377">
    <property type="interactions" value="27"/>
</dbReference>
<dbReference type="IntAct" id="P29377">
    <property type="interactions" value="4"/>
</dbReference>
<dbReference type="STRING" id="9606.ENSP00000369547"/>
<dbReference type="DrugBank" id="DB11093">
    <property type="generic name" value="Calcium citrate"/>
</dbReference>
<dbReference type="DrugBank" id="DB11348">
    <property type="generic name" value="Calcium Phosphate"/>
</dbReference>
<dbReference type="DrugBank" id="DB14481">
    <property type="generic name" value="Calcium phosphate dihydrate"/>
</dbReference>
<dbReference type="DrugBank" id="DB04464">
    <property type="generic name" value="N-Formylmethionine"/>
</dbReference>
<dbReference type="iPTMnet" id="P29377"/>
<dbReference type="PhosphoSitePlus" id="P29377"/>
<dbReference type="BioMuta" id="S100G"/>
<dbReference type="DMDM" id="115387"/>
<dbReference type="MassIVE" id="P29377"/>
<dbReference type="PaxDb" id="9606-ENSP00000369547"/>
<dbReference type="PeptideAtlas" id="P29377"/>
<dbReference type="ProteomicsDB" id="54565"/>
<dbReference type="Antibodypedia" id="4324">
    <property type="antibodies" value="100 antibodies from 16 providers"/>
</dbReference>
<dbReference type="DNASU" id="795"/>
<dbReference type="Ensembl" id="ENST00000380200.3">
    <property type="protein sequence ID" value="ENSP00000369547.3"/>
    <property type="gene ID" value="ENSG00000169906.5"/>
</dbReference>
<dbReference type="GeneID" id="795"/>
<dbReference type="KEGG" id="hsa:795"/>
<dbReference type="MANE-Select" id="ENST00000380200.3">
    <property type="protein sequence ID" value="ENSP00000369547.3"/>
    <property type="RefSeq nucleotide sequence ID" value="NM_004057.3"/>
    <property type="RefSeq protein sequence ID" value="NP_004048.1"/>
</dbReference>
<dbReference type="UCSC" id="uc004cxn.2">
    <property type="organism name" value="human"/>
</dbReference>
<dbReference type="AGR" id="HGNC:1436"/>
<dbReference type="CTD" id="795"/>
<dbReference type="DisGeNET" id="795"/>
<dbReference type="GeneCards" id="S100G"/>
<dbReference type="HGNC" id="HGNC:1436">
    <property type="gene designation" value="S100G"/>
</dbReference>
<dbReference type="HPA" id="ENSG00000169906">
    <property type="expression patterns" value="Tissue enriched (intestine)"/>
</dbReference>
<dbReference type="MIM" id="302020">
    <property type="type" value="gene"/>
</dbReference>
<dbReference type="neXtProt" id="NX_P29377"/>
<dbReference type="OpenTargets" id="ENSG00000169906"/>
<dbReference type="PharmGKB" id="PA26028"/>
<dbReference type="VEuPathDB" id="HostDB:ENSG00000169906"/>
<dbReference type="eggNOG" id="ENOG502T3Z3">
    <property type="taxonomic scope" value="Eukaryota"/>
</dbReference>
<dbReference type="GeneTree" id="ENSGT00530000064238"/>
<dbReference type="HOGENOM" id="CLU_138624_4_0_1"/>
<dbReference type="InParanoid" id="P29377"/>
<dbReference type="OMA" id="QKYAAKE"/>
<dbReference type="OrthoDB" id="26525at2759"/>
<dbReference type="PAN-GO" id="P29377">
    <property type="GO annotations" value="4 GO annotations based on evolutionary models"/>
</dbReference>
<dbReference type="PhylomeDB" id="P29377"/>
<dbReference type="TreeFam" id="TF332727"/>
<dbReference type="PathwayCommons" id="P29377"/>
<dbReference type="SignaLink" id="P29377"/>
<dbReference type="SIGNOR" id="P29377"/>
<dbReference type="BioGRID-ORCS" id="795">
    <property type="hits" value="46 hits in 710 CRISPR screens"/>
</dbReference>
<dbReference type="ChiTaRS" id="S100G">
    <property type="organism name" value="human"/>
</dbReference>
<dbReference type="GeneWiki" id="S100G"/>
<dbReference type="GenomeRNAi" id="795"/>
<dbReference type="Pharos" id="P29377">
    <property type="development level" value="Tbio"/>
</dbReference>
<dbReference type="PRO" id="PR:P29377"/>
<dbReference type="Proteomes" id="UP000005640">
    <property type="component" value="Chromosome X"/>
</dbReference>
<dbReference type="RNAct" id="P29377">
    <property type="molecule type" value="protein"/>
</dbReference>
<dbReference type="Bgee" id="ENSG00000169906">
    <property type="expression patterns" value="Expressed in jejunal mucosa and 41 other cell types or tissues"/>
</dbReference>
<dbReference type="GO" id="GO:0016324">
    <property type="term" value="C:apical plasma membrane"/>
    <property type="evidence" value="ECO:0007669"/>
    <property type="project" value="Ensembl"/>
</dbReference>
<dbReference type="GO" id="GO:0016323">
    <property type="term" value="C:basolateral plasma membrane"/>
    <property type="evidence" value="ECO:0007669"/>
    <property type="project" value="Ensembl"/>
</dbReference>
<dbReference type="GO" id="GO:0005737">
    <property type="term" value="C:cytoplasm"/>
    <property type="evidence" value="ECO:0000318"/>
    <property type="project" value="GO_Central"/>
</dbReference>
<dbReference type="GO" id="GO:0005509">
    <property type="term" value="F:calcium ion binding"/>
    <property type="evidence" value="ECO:0000318"/>
    <property type="project" value="GO_Central"/>
</dbReference>
<dbReference type="GO" id="GO:0048306">
    <property type="term" value="F:calcium-dependent protein binding"/>
    <property type="evidence" value="ECO:0000318"/>
    <property type="project" value="GO_Central"/>
</dbReference>
<dbReference type="GO" id="GO:0046914">
    <property type="term" value="F:transition metal ion binding"/>
    <property type="evidence" value="ECO:0007669"/>
    <property type="project" value="InterPro"/>
</dbReference>
<dbReference type="GO" id="GO:0005499">
    <property type="term" value="F:vitamin D binding"/>
    <property type="evidence" value="ECO:0007669"/>
    <property type="project" value="UniProtKB-KW"/>
</dbReference>
<dbReference type="CDD" id="cd00213">
    <property type="entry name" value="S-100"/>
    <property type="match status" value="1"/>
</dbReference>
<dbReference type="FunFam" id="1.10.238.10:FF:000236">
    <property type="entry name" value="Protein S100"/>
    <property type="match status" value="1"/>
</dbReference>
<dbReference type="Gene3D" id="1.10.238.10">
    <property type="entry name" value="EF-hand"/>
    <property type="match status" value="1"/>
</dbReference>
<dbReference type="InterPro" id="IPR011992">
    <property type="entry name" value="EF-hand-dom_pair"/>
</dbReference>
<dbReference type="InterPro" id="IPR018247">
    <property type="entry name" value="EF_Hand_1_Ca_BS"/>
</dbReference>
<dbReference type="InterPro" id="IPR002048">
    <property type="entry name" value="EF_hand_dom"/>
</dbReference>
<dbReference type="InterPro" id="IPR034325">
    <property type="entry name" value="S-100_dom"/>
</dbReference>
<dbReference type="InterPro" id="IPR001751">
    <property type="entry name" value="S100/CaBP7/8-like_CS"/>
</dbReference>
<dbReference type="InterPro" id="IPR013787">
    <property type="entry name" value="S100_Ca-bd_sub"/>
</dbReference>
<dbReference type="PANTHER" id="PTHR11639:SF73">
    <property type="entry name" value="PROTEIN S100-G"/>
    <property type="match status" value="1"/>
</dbReference>
<dbReference type="PANTHER" id="PTHR11639">
    <property type="entry name" value="S100 CALCIUM-BINDING PROTEIN"/>
    <property type="match status" value="1"/>
</dbReference>
<dbReference type="Pfam" id="PF00036">
    <property type="entry name" value="EF-hand_1"/>
    <property type="match status" value="1"/>
</dbReference>
<dbReference type="Pfam" id="PF01023">
    <property type="entry name" value="S_100"/>
    <property type="match status" value="1"/>
</dbReference>
<dbReference type="SMART" id="SM00054">
    <property type="entry name" value="EFh"/>
    <property type="match status" value="1"/>
</dbReference>
<dbReference type="SMART" id="SM01394">
    <property type="entry name" value="S_100"/>
    <property type="match status" value="1"/>
</dbReference>
<dbReference type="SUPFAM" id="SSF47473">
    <property type="entry name" value="EF-hand"/>
    <property type="match status" value="1"/>
</dbReference>
<dbReference type="PROSITE" id="PS00018">
    <property type="entry name" value="EF_HAND_1"/>
    <property type="match status" value="1"/>
</dbReference>
<dbReference type="PROSITE" id="PS50222">
    <property type="entry name" value="EF_HAND_2"/>
    <property type="match status" value="1"/>
</dbReference>
<dbReference type="PROSITE" id="PS00303">
    <property type="entry name" value="S100_CABP"/>
    <property type="match status" value="1"/>
</dbReference>
<sequence>MSTKKSPEELKRIFEKYAAKEGDPDQLSKDELKLLIQAEFPSLLKGPNTLDDLFQELDKNGDGEVSFEEFQVLVKKISQ</sequence>
<organism>
    <name type="scientific">Homo sapiens</name>
    <name type="common">Human</name>
    <dbReference type="NCBI Taxonomy" id="9606"/>
    <lineage>
        <taxon>Eukaryota</taxon>
        <taxon>Metazoa</taxon>
        <taxon>Chordata</taxon>
        <taxon>Craniata</taxon>
        <taxon>Vertebrata</taxon>
        <taxon>Euteleostomi</taxon>
        <taxon>Mammalia</taxon>
        <taxon>Eutheria</taxon>
        <taxon>Euarchontoglires</taxon>
        <taxon>Primates</taxon>
        <taxon>Haplorrhini</taxon>
        <taxon>Catarrhini</taxon>
        <taxon>Hominidae</taxon>
        <taxon>Homo</taxon>
    </lineage>
</organism>
<protein>
    <recommendedName>
        <fullName>Protein S100-G</fullName>
    </recommendedName>
    <alternativeName>
        <fullName>Calbindin-D9k</fullName>
    </alternativeName>
    <alternativeName>
        <fullName>S100 calcium-binding protein G</fullName>
    </alternativeName>
    <alternativeName>
        <fullName>Vitamin D-dependent calcium-binding protein, intestinal</fullName>
        <shortName>CABP</shortName>
    </alternativeName>
</protein>
<proteinExistence type="evidence at protein level"/>
<keyword id="KW-0007">Acetylation</keyword>
<keyword id="KW-0106">Calcium</keyword>
<keyword id="KW-0479">Metal-binding</keyword>
<keyword id="KW-0597">Phosphoprotein</keyword>
<keyword id="KW-1267">Proteomics identification</keyword>
<keyword id="KW-1185">Reference proteome</keyword>
<keyword id="KW-0677">Repeat</keyword>
<keyword id="KW-0848">Vitamin D</keyword>
<accession>P29377</accession>
<accession>Q5JS49</accession>
<comment type="interaction">
    <interactant intactId="EBI-22734539">
        <id>P29377</id>
    </interactant>
    <interactant intactId="EBI-12028784">
        <id>Q6X4W1-2</id>
        <label>NSMF</label>
    </interactant>
    <organismsDiffer>false</organismsDiffer>
    <experiments>3</experiments>
</comment>
<comment type="similarity">
    <text evidence="4">Belongs to the S-100 family.</text>
</comment>
<feature type="initiator methionine" description="Removed" evidence="1">
    <location>
        <position position="1"/>
    </location>
</feature>
<feature type="chain" id="PRO_0000144027" description="Protein S100-G">
    <location>
        <begin position="2"/>
        <end position="79"/>
    </location>
</feature>
<feature type="domain" description="EF-hand 1" evidence="4">
    <location>
        <begin position="13"/>
        <end position="48"/>
    </location>
</feature>
<feature type="domain" description="EF-hand 2" evidence="3">
    <location>
        <begin position="45"/>
        <end position="79"/>
    </location>
</feature>
<feature type="binding site" evidence="4">
    <location>
        <position position="26"/>
    </location>
    <ligand>
        <name>Ca(2+)</name>
        <dbReference type="ChEBI" id="CHEBI:29108"/>
        <label>1</label>
        <note>low affinity</note>
    </ligand>
</feature>
<feature type="binding site" evidence="4">
    <location>
        <position position="31"/>
    </location>
    <ligand>
        <name>Ca(2+)</name>
        <dbReference type="ChEBI" id="CHEBI:29108"/>
        <label>1</label>
        <note>low affinity</note>
    </ligand>
</feature>
<feature type="binding site" evidence="3">
    <location>
        <position position="58"/>
    </location>
    <ligand>
        <name>Ca(2+)</name>
        <dbReference type="ChEBI" id="CHEBI:29108"/>
        <label>2</label>
        <note>high affinity</note>
    </ligand>
</feature>
<feature type="binding site" evidence="3">
    <location>
        <position position="60"/>
    </location>
    <ligand>
        <name>Ca(2+)</name>
        <dbReference type="ChEBI" id="CHEBI:29108"/>
        <label>2</label>
        <note>high affinity</note>
    </ligand>
</feature>
<feature type="binding site" evidence="3">
    <location>
        <position position="62"/>
    </location>
    <ligand>
        <name>Ca(2+)</name>
        <dbReference type="ChEBI" id="CHEBI:29108"/>
        <label>2</label>
        <note>high affinity</note>
    </ligand>
</feature>
<feature type="binding site" evidence="3">
    <location>
        <position position="64"/>
    </location>
    <ligand>
        <name>Ca(2+)</name>
        <dbReference type="ChEBI" id="CHEBI:29108"/>
        <label>2</label>
        <note>high affinity</note>
    </ligand>
</feature>
<feature type="binding site" evidence="3">
    <location>
        <position position="69"/>
    </location>
    <ligand>
        <name>Ca(2+)</name>
        <dbReference type="ChEBI" id="CHEBI:29108"/>
        <label>2</label>
        <note>high affinity</note>
    </ligand>
</feature>
<feature type="modified residue" description="N-acetylserine" evidence="1">
    <location>
        <position position="2"/>
    </location>
</feature>
<feature type="modified residue" description="Phosphoserine" evidence="2">
    <location>
        <position position="42"/>
    </location>
</feature>
<feature type="sequence conflict" description="In Ref. 3; AAA35637." evidence="4" ref="3">
    <original>Q</original>
    <variation>S</variation>
    <location>
        <position position="79"/>
    </location>
</feature>
<name>S100G_HUMAN</name>
<evidence type="ECO:0000250" key="1">
    <source>
        <dbReference type="UniProtKB" id="P02633"/>
    </source>
</evidence>
<evidence type="ECO:0000250" key="2">
    <source>
        <dbReference type="UniProtKB" id="P02634"/>
    </source>
</evidence>
<evidence type="ECO:0000255" key="3">
    <source>
        <dbReference type="PROSITE-ProRule" id="PRU00448"/>
    </source>
</evidence>
<evidence type="ECO:0000305" key="4"/>
<reference key="1">
    <citation type="journal article" date="1992" name="Biochem. Biophys. Res. Commun.">
        <title>Molecular cloning and chromosomal assignment of human calbindin-D9k.</title>
        <authorList>
            <person name="Howard A."/>
            <person name="Legon S."/>
            <person name="Spurr N.K."/>
            <person name="Walters J.R.I."/>
        </authorList>
    </citation>
    <scope>NUCLEOTIDE SEQUENCE [MRNA]</scope>
</reference>
<reference key="2">
    <citation type="journal article" date="1992" name="FEBS Lett.">
        <title>Molecular cloning of the full-length cDNA encoding the human calbindin-D9k.</title>
        <authorList>
            <person name="Jeung E.B."/>
            <person name="Krisinger J."/>
            <person name="Dann J.L."/>
            <person name="Leung P.C.K."/>
        </authorList>
    </citation>
    <scope>NUCLEOTIDE SEQUENCE [MRNA]</scope>
</reference>
<reference key="3">
    <citation type="journal article" date="1994" name="J. Mol. Biol.">
        <title>The human calbindin-D9k gene. Complete structure and implications on steroid hormone regulation.</title>
        <authorList>
            <person name="Jeung E.B."/>
            <person name="Leung P.C.K."/>
            <person name="Krisinger J."/>
        </authorList>
    </citation>
    <scope>NUCLEOTIDE SEQUENCE [GENOMIC DNA]</scope>
</reference>
<reference key="4">
    <citation type="journal article" date="2005" name="Nature">
        <title>The DNA sequence of the human X chromosome.</title>
        <authorList>
            <person name="Ross M.T."/>
            <person name="Grafham D.V."/>
            <person name="Coffey A.J."/>
            <person name="Scherer S."/>
            <person name="McLay K."/>
            <person name="Muzny D."/>
            <person name="Platzer M."/>
            <person name="Howell G.R."/>
            <person name="Burrows C."/>
            <person name="Bird C.P."/>
            <person name="Frankish A."/>
            <person name="Lovell F.L."/>
            <person name="Howe K.L."/>
            <person name="Ashurst J.L."/>
            <person name="Fulton R.S."/>
            <person name="Sudbrak R."/>
            <person name="Wen G."/>
            <person name="Jones M.C."/>
            <person name="Hurles M.E."/>
            <person name="Andrews T.D."/>
            <person name="Scott C.E."/>
            <person name="Searle S."/>
            <person name="Ramser J."/>
            <person name="Whittaker A."/>
            <person name="Deadman R."/>
            <person name="Carter N.P."/>
            <person name="Hunt S.E."/>
            <person name="Chen R."/>
            <person name="Cree A."/>
            <person name="Gunaratne P."/>
            <person name="Havlak P."/>
            <person name="Hodgson A."/>
            <person name="Metzker M.L."/>
            <person name="Richards S."/>
            <person name="Scott G."/>
            <person name="Steffen D."/>
            <person name="Sodergren E."/>
            <person name="Wheeler D.A."/>
            <person name="Worley K.C."/>
            <person name="Ainscough R."/>
            <person name="Ambrose K.D."/>
            <person name="Ansari-Lari M.A."/>
            <person name="Aradhya S."/>
            <person name="Ashwell R.I."/>
            <person name="Babbage A.K."/>
            <person name="Bagguley C.L."/>
            <person name="Ballabio A."/>
            <person name="Banerjee R."/>
            <person name="Barker G.E."/>
            <person name="Barlow K.F."/>
            <person name="Barrett I.P."/>
            <person name="Bates K.N."/>
            <person name="Beare D.M."/>
            <person name="Beasley H."/>
            <person name="Beasley O."/>
            <person name="Beck A."/>
            <person name="Bethel G."/>
            <person name="Blechschmidt K."/>
            <person name="Brady N."/>
            <person name="Bray-Allen S."/>
            <person name="Bridgeman A.M."/>
            <person name="Brown A.J."/>
            <person name="Brown M.J."/>
            <person name="Bonnin D."/>
            <person name="Bruford E.A."/>
            <person name="Buhay C."/>
            <person name="Burch P."/>
            <person name="Burford D."/>
            <person name="Burgess J."/>
            <person name="Burrill W."/>
            <person name="Burton J."/>
            <person name="Bye J.M."/>
            <person name="Carder C."/>
            <person name="Carrel L."/>
            <person name="Chako J."/>
            <person name="Chapman J.C."/>
            <person name="Chavez D."/>
            <person name="Chen E."/>
            <person name="Chen G."/>
            <person name="Chen Y."/>
            <person name="Chen Z."/>
            <person name="Chinault C."/>
            <person name="Ciccodicola A."/>
            <person name="Clark S.Y."/>
            <person name="Clarke G."/>
            <person name="Clee C.M."/>
            <person name="Clegg S."/>
            <person name="Clerc-Blankenburg K."/>
            <person name="Clifford K."/>
            <person name="Cobley V."/>
            <person name="Cole C.G."/>
            <person name="Conquer J.S."/>
            <person name="Corby N."/>
            <person name="Connor R.E."/>
            <person name="David R."/>
            <person name="Davies J."/>
            <person name="Davis C."/>
            <person name="Davis J."/>
            <person name="Delgado O."/>
            <person name="Deshazo D."/>
            <person name="Dhami P."/>
            <person name="Ding Y."/>
            <person name="Dinh H."/>
            <person name="Dodsworth S."/>
            <person name="Draper H."/>
            <person name="Dugan-Rocha S."/>
            <person name="Dunham A."/>
            <person name="Dunn M."/>
            <person name="Durbin K.J."/>
            <person name="Dutta I."/>
            <person name="Eades T."/>
            <person name="Ellwood M."/>
            <person name="Emery-Cohen A."/>
            <person name="Errington H."/>
            <person name="Evans K.L."/>
            <person name="Faulkner L."/>
            <person name="Francis F."/>
            <person name="Frankland J."/>
            <person name="Fraser A.E."/>
            <person name="Galgoczy P."/>
            <person name="Gilbert J."/>
            <person name="Gill R."/>
            <person name="Gloeckner G."/>
            <person name="Gregory S.G."/>
            <person name="Gribble S."/>
            <person name="Griffiths C."/>
            <person name="Grocock R."/>
            <person name="Gu Y."/>
            <person name="Gwilliam R."/>
            <person name="Hamilton C."/>
            <person name="Hart E.A."/>
            <person name="Hawes A."/>
            <person name="Heath P.D."/>
            <person name="Heitmann K."/>
            <person name="Hennig S."/>
            <person name="Hernandez J."/>
            <person name="Hinzmann B."/>
            <person name="Ho S."/>
            <person name="Hoffs M."/>
            <person name="Howden P.J."/>
            <person name="Huckle E.J."/>
            <person name="Hume J."/>
            <person name="Hunt P.J."/>
            <person name="Hunt A.R."/>
            <person name="Isherwood J."/>
            <person name="Jacob L."/>
            <person name="Johnson D."/>
            <person name="Jones S."/>
            <person name="de Jong P.J."/>
            <person name="Joseph S.S."/>
            <person name="Keenan S."/>
            <person name="Kelly S."/>
            <person name="Kershaw J.K."/>
            <person name="Khan Z."/>
            <person name="Kioschis P."/>
            <person name="Klages S."/>
            <person name="Knights A.J."/>
            <person name="Kosiura A."/>
            <person name="Kovar-Smith C."/>
            <person name="Laird G.K."/>
            <person name="Langford C."/>
            <person name="Lawlor S."/>
            <person name="Leversha M."/>
            <person name="Lewis L."/>
            <person name="Liu W."/>
            <person name="Lloyd C."/>
            <person name="Lloyd D.M."/>
            <person name="Loulseged H."/>
            <person name="Loveland J.E."/>
            <person name="Lovell J.D."/>
            <person name="Lozado R."/>
            <person name="Lu J."/>
            <person name="Lyne R."/>
            <person name="Ma J."/>
            <person name="Maheshwari M."/>
            <person name="Matthews L.H."/>
            <person name="McDowall J."/>
            <person name="McLaren S."/>
            <person name="McMurray A."/>
            <person name="Meidl P."/>
            <person name="Meitinger T."/>
            <person name="Milne S."/>
            <person name="Miner G."/>
            <person name="Mistry S.L."/>
            <person name="Morgan M."/>
            <person name="Morris S."/>
            <person name="Mueller I."/>
            <person name="Mullikin J.C."/>
            <person name="Nguyen N."/>
            <person name="Nordsiek G."/>
            <person name="Nyakatura G."/>
            <person name="O'dell C.N."/>
            <person name="Okwuonu G."/>
            <person name="Palmer S."/>
            <person name="Pandian R."/>
            <person name="Parker D."/>
            <person name="Parrish J."/>
            <person name="Pasternak S."/>
            <person name="Patel D."/>
            <person name="Pearce A.V."/>
            <person name="Pearson D.M."/>
            <person name="Pelan S.E."/>
            <person name="Perez L."/>
            <person name="Porter K.M."/>
            <person name="Ramsey Y."/>
            <person name="Reichwald K."/>
            <person name="Rhodes S."/>
            <person name="Ridler K.A."/>
            <person name="Schlessinger D."/>
            <person name="Schueler M.G."/>
            <person name="Sehra H.K."/>
            <person name="Shaw-Smith C."/>
            <person name="Shen H."/>
            <person name="Sheridan E.M."/>
            <person name="Shownkeen R."/>
            <person name="Skuce C.D."/>
            <person name="Smith M.L."/>
            <person name="Sotheran E.C."/>
            <person name="Steingruber H.E."/>
            <person name="Steward C.A."/>
            <person name="Storey R."/>
            <person name="Swann R.M."/>
            <person name="Swarbreck D."/>
            <person name="Tabor P.E."/>
            <person name="Taudien S."/>
            <person name="Taylor T."/>
            <person name="Teague B."/>
            <person name="Thomas K."/>
            <person name="Thorpe A."/>
            <person name="Timms K."/>
            <person name="Tracey A."/>
            <person name="Trevanion S."/>
            <person name="Tromans A.C."/>
            <person name="d'Urso M."/>
            <person name="Verduzco D."/>
            <person name="Villasana D."/>
            <person name="Waldron L."/>
            <person name="Wall M."/>
            <person name="Wang Q."/>
            <person name="Warren J."/>
            <person name="Warry G.L."/>
            <person name="Wei X."/>
            <person name="West A."/>
            <person name="Whitehead S.L."/>
            <person name="Whiteley M.N."/>
            <person name="Wilkinson J.E."/>
            <person name="Willey D.L."/>
            <person name="Williams G."/>
            <person name="Williams L."/>
            <person name="Williamson A."/>
            <person name="Williamson H."/>
            <person name="Wilming L."/>
            <person name="Woodmansey R.L."/>
            <person name="Wray P.W."/>
            <person name="Yen J."/>
            <person name="Zhang J."/>
            <person name="Zhou J."/>
            <person name="Zoghbi H."/>
            <person name="Zorilla S."/>
            <person name="Buck D."/>
            <person name="Reinhardt R."/>
            <person name="Poustka A."/>
            <person name="Rosenthal A."/>
            <person name="Lehrach H."/>
            <person name="Meindl A."/>
            <person name="Minx P.J."/>
            <person name="Hillier L.W."/>
            <person name="Willard H.F."/>
            <person name="Wilson R.K."/>
            <person name="Waterston R.H."/>
            <person name="Rice C.M."/>
            <person name="Vaudin M."/>
            <person name="Coulson A."/>
            <person name="Nelson D.L."/>
            <person name="Weinstock G."/>
            <person name="Sulston J.E."/>
            <person name="Durbin R.M."/>
            <person name="Hubbard T."/>
            <person name="Gibbs R.A."/>
            <person name="Beck S."/>
            <person name="Rogers J."/>
            <person name="Bentley D.R."/>
        </authorList>
    </citation>
    <scope>NUCLEOTIDE SEQUENCE [LARGE SCALE GENOMIC DNA]</scope>
</reference>
<reference key="5">
    <citation type="journal article" date="2004" name="Genome Res.">
        <title>The status, quality, and expansion of the NIH full-length cDNA project: the Mammalian Gene Collection (MGC).</title>
        <authorList>
            <consortium name="The MGC Project Team"/>
        </authorList>
    </citation>
    <scope>NUCLEOTIDE SEQUENCE [LARGE SCALE MRNA]</scope>
</reference>
<gene>
    <name type="primary">S100G</name>
    <name type="synonym">CABP9K</name>
    <name type="synonym">CALB3</name>
    <name type="synonym">S100D</name>
</gene>